<gene>
    <name evidence="6" type="primary">mgtS</name>
    <name type="synonym">yneM</name>
    <name type="ordered locus">b4599</name>
    <name type="ordered locus">JW1527.1</name>
</gene>
<comment type="function">
    <text evidence="4">Modulates intracellular Mg(2+) levels to maintain cellular integrity upon Mg(2+) limitation. Acts by binding and stabilizing the Mg(2+) transporter MgtA, thereby leading to increased intracellular level of Mg(2+). May inhibit FtsH proteolysis of MgtA.</text>
</comment>
<comment type="subunit">
    <text evidence="4">Interacts with MgtA.</text>
</comment>
<comment type="subcellular location">
    <subcellularLocation>
        <location evidence="3 8">Cell inner membrane</location>
        <topology evidence="3">Single-pass membrane protein</topology>
    </subcellularLocation>
</comment>
<comment type="induction">
    <text evidence="2 4 5">Induced by very low Mg(2+) via the PhoQ/PhoP two-component regulatory system (PubMed:28512220). Induced by SDS/EDTA (envelope stress), at 45 degrees Celsius, repressed in minimal glucose or glycerol medium and by the thiol oxidant diamide (at protein level) (PubMed:19734316). Expressed in both exponential and stationary phase in rich medium; expression is higher in exponential phase (at protein level) (PubMed:30837344).</text>
</comment>
<comment type="disruption phenotype">
    <text evidence="4">Upon Mg(2+) depletion, deletion mutants have lower intracellular Mg(2+) levels than wild-type cells.</text>
</comment>
<dbReference type="EMBL" id="U00096">
    <property type="protein sequence ID" value="ABP93445.1"/>
    <property type="molecule type" value="Genomic_DNA"/>
</dbReference>
<dbReference type="EMBL" id="AP009048">
    <property type="status" value="NOT_ANNOTATED_CDS"/>
    <property type="molecule type" value="Genomic_DNA"/>
</dbReference>
<dbReference type="RefSeq" id="WP_000901367.1">
    <property type="nucleotide sequence ID" value="NZ_STEB01000003.1"/>
</dbReference>
<dbReference type="RefSeq" id="YP_001165319.1">
    <property type="nucleotide sequence ID" value="NC_000913.3"/>
</dbReference>
<dbReference type="PDB" id="5OQT">
    <property type="method" value="X-ray"/>
    <property type="resolution" value="2.86 A"/>
    <property type="chains" value="C=1-31"/>
</dbReference>
<dbReference type="PDB" id="6F34">
    <property type="method" value="X-ray"/>
    <property type="resolution" value="3.13 A"/>
    <property type="chains" value="C=1-27"/>
</dbReference>
<dbReference type="PDBsum" id="5OQT"/>
<dbReference type="PDBsum" id="6F34"/>
<dbReference type="SMR" id="A5A616"/>
<dbReference type="FunCoup" id="A5A616">
    <property type="interactions" value="2"/>
</dbReference>
<dbReference type="STRING" id="511145.b4599"/>
<dbReference type="PaxDb" id="511145-b4599"/>
<dbReference type="EnsemblBacteria" id="ABP93445">
    <property type="protein sequence ID" value="ABP93445"/>
    <property type="gene ID" value="b4599"/>
</dbReference>
<dbReference type="GeneID" id="5061497"/>
<dbReference type="GeneID" id="93032982"/>
<dbReference type="KEGG" id="eco:b4599"/>
<dbReference type="KEGG" id="ecoc:C3026_08865"/>
<dbReference type="PATRIC" id="fig|511145.12.peg.1604"/>
<dbReference type="eggNOG" id="ENOG5033MGC">
    <property type="taxonomic scope" value="Bacteria"/>
</dbReference>
<dbReference type="InParanoid" id="A5A616"/>
<dbReference type="OrthoDB" id="6574591at2"/>
<dbReference type="BioCyc" id="EcoCyc:MONOMER0-766"/>
<dbReference type="PRO" id="PR:A5A616"/>
<dbReference type="Proteomes" id="UP000000625">
    <property type="component" value="Chromosome"/>
</dbReference>
<dbReference type="GO" id="GO:0005886">
    <property type="term" value="C:plasma membrane"/>
    <property type="evidence" value="ECO:0000314"/>
    <property type="project" value="EcoCyc"/>
</dbReference>
<dbReference type="GO" id="GO:0010350">
    <property type="term" value="P:cellular response to magnesium starvation"/>
    <property type="evidence" value="ECO:0000270"/>
    <property type="project" value="EcoCyc"/>
</dbReference>
<dbReference type="GO" id="GO:0010960">
    <property type="term" value="P:magnesium ion homeostasis"/>
    <property type="evidence" value="ECO:0000269"/>
    <property type="project" value="EcoCyc"/>
</dbReference>
<dbReference type="InterPro" id="IPR047998">
    <property type="entry name" value="MgtS"/>
</dbReference>
<dbReference type="NCBIfam" id="NF033842">
    <property type="entry name" value="small_MgtS"/>
    <property type="match status" value="1"/>
</dbReference>
<dbReference type="Pfam" id="PF22865">
    <property type="entry name" value="MgtS-like"/>
    <property type="match status" value="1"/>
</dbReference>
<accession>A5A616</accession>
<keyword id="KW-0002">3D-structure</keyword>
<keyword id="KW-0997">Cell inner membrane</keyword>
<keyword id="KW-1003">Cell membrane</keyword>
<keyword id="KW-0472">Membrane</keyword>
<keyword id="KW-1185">Reference proteome</keyword>
<keyword id="KW-0346">Stress response</keyword>
<keyword id="KW-0812">Transmembrane</keyword>
<keyword id="KW-1133">Transmembrane helix</keyword>
<sequence>MLGNMNVFMAVLGIILFSGFLAAYFSHKWDD</sequence>
<evidence type="ECO:0000255" key="1"/>
<evidence type="ECO:0000269" key="2">
    <source>
    </source>
</evidence>
<evidence type="ECO:0000269" key="3">
    <source>
    </source>
</evidence>
<evidence type="ECO:0000269" key="4">
    <source>
    </source>
</evidence>
<evidence type="ECO:0000269" key="5">
    <source>
    </source>
</evidence>
<evidence type="ECO:0000303" key="6">
    <source>
    </source>
</evidence>
<evidence type="ECO:0000305" key="7"/>
<evidence type="ECO:0000305" key="8">
    <source>
    </source>
</evidence>
<evidence type="ECO:0007744" key="9">
    <source>
        <dbReference type="PDB" id="5OQT"/>
    </source>
</evidence>
<evidence type="ECO:0007744" key="10">
    <source>
        <dbReference type="PDB" id="6F34"/>
    </source>
</evidence>
<evidence type="ECO:0007829" key="11">
    <source>
        <dbReference type="PDB" id="5OQT"/>
    </source>
</evidence>
<organism>
    <name type="scientific">Escherichia coli (strain K12)</name>
    <dbReference type="NCBI Taxonomy" id="83333"/>
    <lineage>
        <taxon>Bacteria</taxon>
        <taxon>Pseudomonadati</taxon>
        <taxon>Pseudomonadota</taxon>
        <taxon>Gammaproteobacteria</taxon>
        <taxon>Enterobacterales</taxon>
        <taxon>Enterobacteriaceae</taxon>
        <taxon>Escherichia</taxon>
    </lineage>
</organism>
<protein>
    <recommendedName>
        <fullName evidence="7">Small protein MgtS</fullName>
    </recommendedName>
</protein>
<name>MGTS_ECOLI</name>
<proteinExistence type="evidence at protein level"/>
<reference key="1">
    <citation type="journal article" date="1997" name="Science">
        <title>The complete genome sequence of Escherichia coli K-12.</title>
        <authorList>
            <person name="Blattner F.R."/>
            <person name="Plunkett G. III"/>
            <person name="Bloch C.A."/>
            <person name="Perna N.T."/>
            <person name="Burland V."/>
            <person name="Riley M."/>
            <person name="Collado-Vides J."/>
            <person name="Glasner J.D."/>
            <person name="Rode C.K."/>
            <person name="Mayhew G.F."/>
            <person name="Gregor J."/>
            <person name="Davis N.W."/>
            <person name="Kirkpatrick H.A."/>
            <person name="Goeden M.A."/>
            <person name="Rose D.J."/>
            <person name="Mau B."/>
            <person name="Shao Y."/>
        </authorList>
    </citation>
    <scope>NUCLEOTIDE SEQUENCE [LARGE SCALE GENOMIC DNA]</scope>
    <source>
        <strain>K12 / MG1655 / ATCC 47076</strain>
    </source>
</reference>
<reference key="2">
    <citation type="journal article" date="2006" name="Mol. Syst. Biol.">
        <title>Highly accurate genome sequences of Escherichia coli K-12 strains MG1655 and W3110.</title>
        <authorList>
            <person name="Hayashi K."/>
            <person name="Morooka N."/>
            <person name="Yamamoto Y."/>
            <person name="Fujita K."/>
            <person name="Isono K."/>
            <person name="Choi S."/>
            <person name="Ohtsubo E."/>
            <person name="Baba T."/>
            <person name="Wanner B.L."/>
            <person name="Mori H."/>
            <person name="Horiuchi T."/>
        </authorList>
    </citation>
    <scope>NUCLEOTIDE SEQUENCE [LARGE SCALE GENOMIC DNA]</scope>
    <source>
        <strain>K12 / W3110 / ATCC 27325 / DSM 5911</strain>
    </source>
</reference>
<reference key="3">
    <citation type="journal article" date="2008" name="Mol. Microbiol.">
        <title>Small membrane proteins found by comparative genomics and ribosome binding site models.</title>
        <authorList>
            <person name="Hemm M.R."/>
            <person name="Paul B.J."/>
            <person name="Schneider T.D."/>
            <person name="Storz G."/>
            <person name="Rudd K.E."/>
        </authorList>
    </citation>
    <scope>SUBCELLULAR LOCATION</scope>
    <source>
        <strain>K12 / MG1655 / ATCC 47076</strain>
    </source>
</reference>
<reference key="4">
    <citation type="journal article" date="2010" name="J. Bacteriol.">
        <title>Small stress response proteins in Escherichia coli: proteins missed by classical proteomic studies.</title>
        <authorList>
            <person name="Hemm M.R."/>
            <person name="Paul B.J."/>
            <person name="Miranda-Rios J."/>
            <person name="Zhang A."/>
            <person name="Soltanzad N."/>
            <person name="Storz G."/>
        </authorList>
    </citation>
    <scope>INDUCTION</scope>
    <source>
        <strain>K12 / MG1655 / ATCC 47076</strain>
    </source>
</reference>
<reference key="5">
    <citation type="journal article" date="2011" name="J. Biol. Chem.">
        <title>Membrane localization of small proteins in Escherichia coli.</title>
        <authorList>
            <person name="Fontaine F."/>
            <person name="Fuchs R.T."/>
            <person name="Storz G."/>
        </authorList>
    </citation>
    <scope>SUBCELLULAR LOCATION</scope>
    <scope>TOPOLOGY</scope>
    <source>
        <strain>K12 / MG1655 / ATCC 47076</strain>
    </source>
</reference>
<reference key="6">
    <citation type="journal article" date="2017" name="Proc. Natl. Acad. Sci. U.S.A.">
        <title>Increasing intracellular magnesium levels with the 31-amino acid MgtS protein.</title>
        <authorList>
            <person name="Wang H."/>
            <person name="Yin X."/>
            <person name="Wu Orr M."/>
            <person name="Dambach M."/>
            <person name="Curtis R."/>
            <person name="Storz G."/>
        </authorList>
    </citation>
    <scope>FUNCTION</scope>
    <scope>INTERACTION WITH MGTA</scope>
    <scope>INDUCTION</scope>
    <scope>DISRUPTION PHENOTYPE</scope>
    <scope>MUTAGENESIS OF GLY-19; LEU-21; SER-26; TRP-29; ASP-30 AND ASP-31</scope>
    <source>
        <strain>K12 / MG1655 / ATCC 47076</strain>
    </source>
</reference>
<reference key="7">
    <citation type="journal article" date="2019" name="MBio">
        <title>Identifying small proteins by ribosome profiling with stalled initiation complexes.</title>
        <authorList>
            <person name="Weaver J."/>
            <person name="Mohammad F."/>
            <person name="Buskirk A.R."/>
            <person name="Storz G."/>
        </authorList>
    </citation>
    <scope>INDUCTION</scope>
    <source>
        <strain>K12 / MG1655 / ATCC 47076</strain>
    </source>
</reference>
<reference evidence="9 10" key="8">
    <citation type="journal article" date="2018" name="Nat. Commun.">
        <title>Structural basis for amino acid transport by the CAT family of SLC7 transporters.</title>
        <authorList>
            <person name="Jungnickel K.E.J."/>
            <person name="Parker J.L."/>
            <person name="Newstead S."/>
        </authorList>
    </citation>
    <scope>X-RAY CRYSTALLOGRAPHY (2.86 ANGSTROMS)</scope>
</reference>
<feature type="chain" id="PRO_0000311788" description="Small protein MgtS">
    <location>
        <begin position="1"/>
        <end position="31"/>
    </location>
</feature>
<feature type="topological domain" description="Periplasmic" evidence="3">
    <location>
        <begin position="1"/>
        <end position="4"/>
    </location>
</feature>
<feature type="transmembrane region" description="Helical" evidence="1">
    <location>
        <begin position="5"/>
        <end position="25"/>
    </location>
</feature>
<feature type="topological domain" description="Cytoplasmic" evidence="3">
    <location>
        <begin position="26"/>
        <end position="31"/>
    </location>
</feature>
<feature type="mutagenesis site" description="No change in activity." evidence="4">
    <original>G</original>
    <variation>A</variation>
    <location>
        <position position="19"/>
    </location>
</feature>
<feature type="mutagenesis site" description="No change in activity." evidence="4">
    <original>L</original>
    <variation>A</variation>
    <location>
        <position position="21"/>
    </location>
</feature>
<feature type="mutagenesis site" description="No change in activity." evidence="4">
    <original>S</original>
    <variation>A</variation>
    <location>
        <position position="26"/>
    </location>
</feature>
<feature type="mutagenesis site" description="Decrease in activity." evidence="4">
    <original>W</original>
    <variation>A</variation>
    <location>
        <position position="29"/>
    </location>
</feature>
<feature type="mutagenesis site" description="Loss of activity." evidence="4">
    <original>D</original>
    <variation>A</variation>
    <location>
        <position position="30"/>
    </location>
</feature>
<feature type="mutagenesis site" description="Loss of activity." evidence="4">
    <original>D</original>
    <variation>A</variation>
    <location>
        <position position="31"/>
    </location>
</feature>
<feature type="helix" evidence="11">
    <location>
        <begin position="3"/>
        <end position="24"/>
    </location>
</feature>